<accession>Q9FFE6</accession>
<reference key="1">
    <citation type="journal article" date="2002" name="Plant Physiol.">
        <title>Arabidopsis contains nine long-chain acyl-coenzyme A synthetase genes that participate in fatty acid and glycerolipid metabolism.</title>
        <authorList>
            <person name="Shockey J.M."/>
            <person name="Fulda M.S."/>
            <person name="Browse J.A."/>
        </authorList>
    </citation>
    <scope>NUCLEOTIDE SEQUENCE [MRNA]</scope>
</reference>
<reference key="2">
    <citation type="journal article" date="1997" name="DNA Res.">
        <title>Structural analysis of Arabidopsis thaliana chromosome 5. I. Sequence features of the 1.6 Mb regions covered by twenty physically assigned P1 clones.</title>
        <authorList>
            <person name="Sato S."/>
            <person name="Kotani H."/>
            <person name="Nakamura Y."/>
            <person name="Kaneko T."/>
            <person name="Asamizu E."/>
            <person name="Fukami M."/>
            <person name="Miyajima N."/>
            <person name="Tabata S."/>
        </authorList>
    </citation>
    <scope>NUCLEOTIDE SEQUENCE [LARGE SCALE GENOMIC DNA]</scope>
    <source>
        <strain>cv. Columbia</strain>
    </source>
</reference>
<reference key="3">
    <citation type="journal article" date="2017" name="Plant J.">
        <title>Araport11: a complete reannotation of the Arabidopsis thaliana reference genome.</title>
        <authorList>
            <person name="Cheng C.Y."/>
            <person name="Krishnakumar V."/>
            <person name="Chan A.P."/>
            <person name="Thibaud-Nissen F."/>
            <person name="Schobel S."/>
            <person name="Town C.D."/>
        </authorList>
    </citation>
    <scope>GENOME REANNOTATION</scope>
    <source>
        <strain>cv. Columbia</strain>
    </source>
</reference>
<reference key="4">
    <citation type="journal article" date="2003" name="Plant Physiol.">
        <title>Arabidopsis contains a large superfamily of acyl-activating enzymes. Phylogenetic and biochemical analysis reveals a new class of acyl-coenzyme a synthetases.</title>
        <authorList>
            <person name="Shockey J.M."/>
            <person name="Fulda M.S."/>
            <person name="Browse J."/>
        </authorList>
    </citation>
    <scope>TISSUE SPECIFICITY</scope>
    <scope>GENE FAMILY</scope>
    <scope>NOMENCLATURE</scope>
</reference>
<reference key="5">
    <citation type="journal article" date="2007" name="Plant Cell">
        <title>Proteome analysis of Arabidopsis leaf peroxisomes reveals novel targeting peptides, metabolic pathways, and defense mechanisms.</title>
        <authorList>
            <person name="Reumann S."/>
            <person name="Babujee L."/>
            <person name="Ma C."/>
            <person name="Wienkoop S."/>
            <person name="Siemsen T."/>
            <person name="Antonicelli G.E."/>
            <person name="Rasche N."/>
            <person name="Lueder F."/>
            <person name="Weckwerth W."/>
            <person name="Jahn O."/>
        </authorList>
    </citation>
    <scope>IDENTIFICATION BY MASS SPECTROMETRY</scope>
</reference>
<comment type="function">
    <text evidence="1">May act as an acid--thiol ligase that activates carboxylic acids by forming acyl-CoAs.</text>
</comment>
<comment type="subcellular location">
    <subcellularLocation>
        <location evidence="4">Peroxisome</location>
    </subcellularLocation>
</comment>
<comment type="tissue specificity">
    <text evidence="3">Expressed in roots, stems and developing seeds.</text>
</comment>
<comment type="similarity">
    <text evidence="4">Belongs to the ATP-dependent AMP-binding enzyme family.</text>
</comment>
<sequence length="552" mass="60770">MEQMKPCAANSPPLTPIGFLERAATVYGDCTSIVYGSNTVYTWRETNLRCLRVASSLSSIGIGRSDVVSVLSPNTPAMYELQFAVPMSGAILNNINTRLDARTVSVLLRHCGSKLLFVDVFSVDLAVEAISMMTTDPPILVFIADKEEEGGDADVADRTKFSYTYDDLIHRGDLDFKWIRPESEWDPVVLNYTSGTTSAPKGVVHCHRGIFVMSIDSLIDWTVPKNPVYLWTLPIFHANGWSYPWGIAAVGGTNVCLRKFDAPLIYRLIRDHGVTHMCGAPVVLNMLSATNEFQPLNRPVNILTAGAPPPAAVLLRAESIGFVISHGYGLTETAGLNVSCAWKPQWNRLPASDRARLKARQGVRTVGFTEIDVVDPESGRSVERNGETVGEIVMRGSSIMLGYLKDPVGTEKALKNGWFYTGDVGVIHSDGYLEIKDRSKDIIITGGENVSSVEVETVLYTNPAVNEVAVVARPDVFWGETPCAFVSLKSGLTQRPTEVEMIEYCRKKMPKYMVPKTVSFVDELPKTSTGKVMKFVLREIAKKMGTTRLSRM</sequence>
<feature type="chain" id="PRO_0000415716" description="Probable acyl-activating enzyme 5, peroxisomal">
    <location>
        <begin position="1"/>
        <end position="552"/>
    </location>
</feature>
<feature type="short sequence motif" description="Microbody targeting signal" evidence="2">
    <location>
        <begin position="550"/>
        <end position="552"/>
    </location>
</feature>
<evidence type="ECO:0000250" key="1"/>
<evidence type="ECO:0000255" key="2"/>
<evidence type="ECO:0000269" key="3">
    <source>
    </source>
</evidence>
<evidence type="ECO:0000305" key="4"/>
<keyword id="KW-0276">Fatty acid metabolism</keyword>
<keyword id="KW-0436">Ligase</keyword>
<keyword id="KW-0443">Lipid metabolism</keyword>
<keyword id="KW-0576">Peroxisome</keyword>
<keyword id="KW-1185">Reference proteome</keyword>
<protein>
    <recommendedName>
        <fullName>Probable acyl-activating enzyme 5, peroxisomal</fullName>
        <ecNumber>6.2.1.-</ecNumber>
    </recommendedName>
    <alternativeName>
        <fullName>AMP-binding protein 5</fullName>
        <shortName>AtAMPBP5</shortName>
    </alternativeName>
</protein>
<dbReference type="EC" id="6.2.1.-"/>
<dbReference type="EMBL" id="AF503764">
    <property type="protein sequence ID" value="AAM28622.1"/>
    <property type="molecule type" value="mRNA"/>
</dbReference>
<dbReference type="EMBL" id="AB005242">
    <property type="protein sequence ID" value="BAB09604.1"/>
    <property type="molecule type" value="Genomic_DNA"/>
</dbReference>
<dbReference type="EMBL" id="CP002688">
    <property type="protein sequence ID" value="AED92284.1"/>
    <property type="molecule type" value="Genomic_DNA"/>
</dbReference>
<dbReference type="RefSeq" id="NP_197141.1">
    <property type="nucleotide sequence ID" value="NM_121642.3"/>
</dbReference>
<dbReference type="SMR" id="Q9FFE6"/>
<dbReference type="FunCoup" id="Q9FFE6">
    <property type="interactions" value="147"/>
</dbReference>
<dbReference type="STRING" id="3702.Q9FFE6"/>
<dbReference type="PaxDb" id="3702-AT5G16370.1"/>
<dbReference type="ProteomicsDB" id="245114"/>
<dbReference type="EnsemblPlants" id="AT5G16370.1">
    <property type="protein sequence ID" value="AT5G16370.1"/>
    <property type="gene ID" value="AT5G16370"/>
</dbReference>
<dbReference type="GeneID" id="831498"/>
<dbReference type="Gramene" id="AT5G16370.1">
    <property type="protein sequence ID" value="AT5G16370.1"/>
    <property type="gene ID" value="AT5G16370"/>
</dbReference>
<dbReference type="KEGG" id="ath:AT5G16370"/>
<dbReference type="Araport" id="AT5G16370"/>
<dbReference type="TAIR" id="AT5G16370">
    <property type="gene designation" value="AAE5"/>
</dbReference>
<dbReference type="eggNOG" id="KOG1176">
    <property type="taxonomic scope" value="Eukaryota"/>
</dbReference>
<dbReference type="HOGENOM" id="CLU_000022_59_5_1"/>
<dbReference type="InParanoid" id="Q9FFE6"/>
<dbReference type="OMA" id="KTMDPMV"/>
<dbReference type="PhylomeDB" id="Q9FFE6"/>
<dbReference type="BioCyc" id="ARA:AT5G16370-MONOMER"/>
<dbReference type="PRO" id="PR:Q9FFE6"/>
<dbReference type="Proteomes" id="UP000006548">
    <property type="component" value="Chromosome 5"/>
</dbReference>
<dbReference type="ExpressionAtlas" id="Q9FFE6">
    <property type="expression patterns" value="baseline and differential"/>
</dbReference>
<dbReference type="GO" id="GO:0005777">
    <property type="term" value="C:peroxisome"/>
    <property type="evidence" value="ECO:0000314"/>
    <property type="project" value="TAIR"/>
</dbReference>
<dbReference type="GO" id="GO:0016874">
    <property type="term" value="F:ligase activity"/>
    <property type="evidence" value="ECO:0007669"/>
    <property type="project" value="UniProtKB-KW"/>
</dbReference>
<dbReference type="GO" id="GO:0006631">
    <property type="term" value="P:fatty acid metabolic process"/>
    <property type="evidence" value="ECO:0007669"/>
    <property type="project" value="UniProtKB-KW"/>
</dbReference>
<dbReference type="CDD" id="cd12118">
    <property type="entry name" value="ttLC_FACS_AEE21_like"/>
    <property type="match status" value="1"/>
</dbReference>
<dbReference type="FunFam" id="3.30.300.30:FF:000008">
    <property type="entry name" value="2,3-dihydroxybenzoate-AMP ligase"/>
    <property type="match status" value="1"/>
</dbReference>
<dbReference type="FunFam" id="3.40.50.12780:FF:000003">
    <property type="entry name" value="Long-chain-fatty-acid--CoA ligase FadD"/>
    <property type="match status" value="1"/>
</dbReference>
<dbReference type="Gene3D" id="3.30.300.30">
    <property type="match status" value="1"/>
</dbReference>
<dbReference type="Gene3D" id="3.40.50.12780">
    <property type="entry name" value="N-terminal domain of ligase-like"/>
    <property type="match status" value="1"/>
</dbReference>
<dbReference type="InterPro" id="IPR025110">
    <property type="entry name" value="AMP-bd_C"/>
</dbReference>
<dbReference type="InterPro" id="IPR045851">
    <property type="entry name" value="AMP-bd_C_sf"/>
</dbReference>
<dbReference type="InterPro" id="IPR020845">
    <property type="entry name" value="AMP-binding_CS"/>
</dbReference>
<dbReference type="InterPro" id="IPR000873">
    <property type="entry name" value="AMP-dep_synth/lig_dom"/>
</dbReference>
<dbReference type="InterPro" id="IPR042099">
    <property type="entry name" value="ANL_N_sf"/>
</dbReference>
<dbReference type="NCBIfam" id="NF006020">
    <property type="entry name" value="PRK08162.1"/>
    <property type="match status" value="1"/>
</dbReference>
<dbReference type="PANTHER" id="PTHR43859">
    <property type="entry name" value="ACYL-ACTIVATING ENZYME"/>
    <property type="match status" value="1"/>
</dbReference>
<dbReference type="PANTHER" id="PTHR43859:SF56">
    <property type="entry name" value="ACYL-ACTIVATING ENZYME 5, PEROXISOMAL-RELATED"/>
    <property type="match status" value="1"/>
</dbReference>
<dbReference type="Pfam" id="PF00501">
    <property type="entry name" value="AMP-binding"/>
    <property type="match status" value="1"/>
</dbReference>
<dbReference type="Pfam" id="PF13193">
    <property type="entry name" value="AMP-binding_C"/>
    <property type="match status" value="1"/>
</dbReference>
<dbReference type="SUPFAM" id="SSF56801">
    <property type="entry name" value="Acetyl-CoA synthetase-like"/>
    <property type="match status" value="1"/>
</dbReference>
<dbReference type="PROSITE" id="PS00455">
    <property type="entry name" value="AMP_BINDING"/>
    <property type="match status" value="1"/>
</dbReference>
<organism>
    <name type="scientific">Arabidopsis thaliana</name>
    <name type="common">Mouse-ear cress</name>
    <dbReference type="NCBI Taxonomy" id="3702"/>
    <lineage>
        <taxon>Eukaryota</taxon>
        <taxon>Viridiplantae</taxon>
        <taxon>Streptophyta</taxon>
        <taxon>Embryophyta</taxon>
        <taxon>Tracheophyta</taxon>
        <taxon>Spermatophyta</taxon>
        <taxon>Magnoliopsida</taxon>
        <taxon>eudicotyledons</taxon>
        <taxon>Gunneridae</taxon>
        <taxon>Pentapetalae</taxon>
        <taxon>rosids</taxon>
        <taxon>malvids</taxon>
        <taxon>Brassicales</taxon>
        <taxon>Brassicaceae</taxon>
        <taxon>Camelineae</taxon>
        <taxon>Arabidopsis</taxon>
    </lineage>
</organism>
<name>AAE5_ARATH</name>
<proteinExistence type="evidence at protein level"/>
<gene>
    <name type="primary">AAE5</name>
    <name type="synonym">AMPBP5</name>
    <name type="ordered locus">At5g16370</name>
    <name type="ORF">MQK4.9</name>
</gene>